<organism>
    <name type="scientific">Escherichia coli O139:H28 (strain E24377A / ETEC)</name>
    <dbReference type="NCBI Taxonomy" id="331111"/>
    <lineage>
        <taxon>Bacteria</taxon>
        <taxon>Pseudomonadati</taxon>
        <taxon>Pseudomonadota</taxon>
        <taxon>Gammaproteobacteria</taxon>
        <taxon>Enterobacterales</taxon>
        <taxon>Enterobacteriaceae</taxon>
        <taxon>Escherichia</taxon>
    </lineage>
</organism>
<reference key="1">
    <citation type="journal article" date="2008" name="J. Bacteriol.">
        <title>The pangenome structure of Escherichia coli: comparative genomic analysis of E. coli commensal and pathogenic isolates.</title>
        <authorList>
            <person name="Rasko D.A."/>
            <person name="Rosovitz M.J."/>
            <person name="Myers G.S.A."/>
            <person name="Mongodin E.F."/>
            <person name="Fricke W.F."/>
            <person name="Gajer P."/>
            <person name="Crabtree J."/>
            <person name="Sebaihia M."/>
            <person name="Thomson N.R."/>
            <person name="Chaudhuri R."/>
            <person name="Henderson I.R."/>
            <person name="Sperandio V."/>
            <person name="Ravel J."/>
        </authorList>
    </citation>
    <scope>NUCLEOTIDE SEQUENCE [LARGE SCALE GENOMIC DNA]</scope>
    <source>
        <strain>E24377A / ETEC</strain>
    </source>
</reference>
<evidence type="ECO:0000255" key="1">
    <source>
        <dbReference type="HAMAP-Rule" id="MF_00519"/>
    </source>
</evidence>
<accession>A7ZHF3</accession>
<keyword id="KW-0054">Arabinose catabolism</keyword>
<keyword id="KW-0119">Carbohydrate metabolism</keyword>
<keyword id="KW-0413">Isomerase</keyword>
<keyword id="KW-0464">Manganese</keyword>
<keyword id="KW-0479">Metal-binding</keyword>
<keyword id="KW-1185">Reference proteome</keyword>
<feature type="chain" id="PRO_1000060912" description="L-arabinose isomerase">
    <location>
        <begin position="1"/>
        <end position="500"/>
    </location>
</feature>
<feature type="binding site" evidence="1">
    <location>
        <position position="306"/>
    </location>
    <ligand>
        <name>Mn(2+)</name>
        <dbReference type="ChEBI" id="CHEBI:29035"/>
    </ligand>
</feature>
<feature type="binding site" evidence="1">
    <location>
        <position position="333"/>
    </location>
    <ligand>
        <name>Mn(2+)</name>
        <dbReference type="ChEBI" id="CHEBI:29035"/>
    </ligand>
</feature>
<feature type="binding site" evidence="1">
    <location>
        <position position="350"/>
    </location>
    <ligand>
        <name>Mn(2+)</name>
        <dbReference type="ChEBI" id="CHEBI:29035"/>
    </ligand>
</feature>
<feature type="binding site" evidence="1">
    <location>
        <position position="450"/>
    </location>
    <ligand>
        <name>Mn(2+)</name>
        <dbReference type="ChEBI" id="CHEBI:29035"/>
    </ligand>
</feature>
<dbReference type="EC" id="5.3.1.4" evidence="1"/>
<dbReference type="EMBL" id="CP000800">
    <property type="protein sequence ID" value="ABV17108.1"/>
    <property type="molecule type" value="Genomic_DNA"/>
</dbReference>
<dbReference type="RefSeq" id="WP_000151734.1">
    <property type="nucleotide sequence ID" value="NC_009801.1"/>
</dbReference>
<dbReference type="SMR" id="A7ZHF3"/>
<dbReference type="GeneID" id="93777375"/>
<dbReference type="KEGG" id="ecw:EcE24377A_0064"/>
<dbReference type="HOGENOM" id="CLU_045663_0_0_6"/>
<dbReference type="UniPathway" id="UPA00145">
    <property type="reaction ID" value="UER00565"/>
</dbReference>
<dbReference type="Proteomes" id="UP000001122">
    <property type="component" value="Chromosome"/>
</dbReference>
<dbReference type="GO" id="GO:0005829">
    <property type="term" value="C:cytosol"/>
    <property type="evidence" value="ECO:0007669"/>
    <property type="project" value="TreeGrafter"/>
</dbReference>
<dbReference type="GO" id="GO:0008733">
    <property type="term" value="F:L-arabinose isomerase activity"/>
    <property type="evidence" value="ECO:0007669"/>
    <property type="project" value="UniProtKB-UniRule"/>
</dbReference>
<dbReference type="GO" id="GO:0030145">
    <property type="term" value="F:manganese ion binding"/>
    <property type="evidence" value="ECO:0007669"/>
    <property type="project" value="UniProtKB-UniRule"/>
</dbReference>
<dbReference type="GO" id="GO:0019569">
    <property type="term" value="P:L-arabinose catabolic process to xylulose 5-phosphate"/>
    <property type="evidence" value="ECO:0007669"/>
    <property type="project" value="UniProtKB-UniRule"/>
</dbReference>
<dbReference type="CDD" id="cd03557">
    <property type="entry name" value="L-arabinose_isomerase"/>
    <property type="match status" value="1"/>
</dbReference>
<dbReference type="FunFam" id="3.40.50.10940:FF:000001">
    <property type="entry name" value="L-arabinose isomerase"/>
    <property type="match status" value="1"/>
</dbReference>
<dbReference type="Gene3D" id="3.40.50.10940">
    <property type="match status" value="1"/>
</dbReference>
<dbReference type="HAMAP" id="MF_00519">
    <property type="entry name" value="Arabinose_Isome"/>
    <property type="match status" value="1"/>
</dbReference>
<dbReference type="InterPro" id="IPR024664">
    <property type="entry name" value="Ara_Isoase_C"/>
</dbReference>
<dbReference type="InterPro" id="IPR055390">
    <property type="entry name" value="AraA_central"/>
</dbReference>
<dbReference type="InterPro" id="IPR055389">
    <property type="entry name" value="AraA_N"/>
</dbReference>
<dbReference type="InterPro" id="IPR038583">
    <property type="entry name" value="AraA_N_sf"/>
</dbReference>
<dbReference type="InterPro" id="IPR004216">
    <property type="entry name" value="Fuc/Ara_isomerase_C"/>
</dbReference>
<dbReference type="InterPro" id="IPR009015">
    <property type="entry name" value="Fucose_isomerase_N/cen_sf"/>
</dbReference>
<dbReference type="InterPro" id="IPR003762">
    <property type="entry name" value="Lara_isomerase"/>
</dbReference>
<dbReference type="NCBIfam" id="NF002795">
    <property type="entry name" value="PRK02929.1"/>
    <property type="match status" value="1"/>
</dbReference>
<dbReference type="PANTHER" id="PTHR38464">
    <property type="entry name" value="L-ARABINOSE ISOMERASE"/>
    <property type="match status" value="1"/>
</dbReference>
<dbReference type="PANTHER" id="PTHR38464:SF1">
    <property type="entry name" value="L-ARABINOSE ISOMERASE"/>
    <property type="match status" value="1"/>
</dbReference>
<dbReference type="Pfam" id="PF24856">
    <property type="entry name" value="AraA_central"/>
    <property type="match status" value="1"/>
</dbReference>
<dbReference type="Pfam" id="PF02610">
    <property type="entry name" value="AraA_N"/>
    <property type="match status" value="1"/>
</dbReference>
<dbReference type="Pfam" id="PF11762">
    <property type="entry name" value="Arabinose_Iso_C"/>
    <property type="match status" value="1"/>
</dbReference>
<dbReference type="PIRSF" id="PIRSF001478">
    <property type="entry name" value="L-ara_isomerase"/>
    <property type="match status" value="1"/>
</dbReference>
<dbReference type="SUPFAM" id="SSF50443">
    <property type="entry name" value="FucI/AraA C-terminal domain-like"/>
    <property type="match status" value="1"/>
</dbReference>
<dbReference type="SUPFAM" id="SSF53743">
    <property type="entry name" value="FucI/AraA N-terminal and middle domains"/>
    <property type="match status" value="1"/>
</dbReference>
<comment type="function">
    <text evidence="1">Catalyzes the conversion of L-arabinose to L-ribulose.</text>
</comment>
<comment type="catalytic activity">
    <reaction evidence="1">
        <text>beta-L-arabinopyranose = L-ribulose</text>
        <dbReference type="Rhea" id="RHEA:14821"/>
        <dbReference type="ChEBI" id="CHEBI:16880"/>
        <dbReference type="ChEBI" id="CHEBI:40886"/>
        <dbReference type="EC" id="5.3.1.4"/>
    </reaction>
</comment>
<comment type="cofactor">
    <cofactor evidence="1">
        <name>Mn(2+)</name>
        <dbReference type="ChEBI" id="CHEBI:29035"/>
    </cofactor>
    <text evidence="1">Binds 1 Mn(2+) ion per subunit.</text>
</comment>
<comment type="pathway">
    <text evidence="1">Carbohydrate degradation; L-arabinose degradation via L-ribulose; D-xylulose 5-phosphate from L-arabinose (bacterial route): step 1/3.</text>
</comment>
<comment type="subunit">
    <text evidence="1">Homohexamer.</text>
</comment>
<comment type="similarity">
    <text evidence="1">Belongs to the arabinose isomerase family.</text>
</comment>
<protein>
    <recommendedName>
        <fullName evidence="1">L-arabinose isomerase</fullName>
        <ecNumber evidence="1">5.3.1.4</ecNumber>
    </recommendedName>
</protein>
<gene>
    <name evidence="1" type="primary">araA</name>
    <name type="ordered locus">EcE24377A_0064</name>
</gene>
<name>ARAA_ECO24</name>
<sequence>MTIFDNYEVWFVIGSQHLYGPETLRQVTQHAEHVVNALNTEAKLPCKLVLKPLGTTPDEITAICRDANYDDRCAGLVVWLHTFSPAKMWINGLTMLNKPLLQFHTQFNAALPWDSIDMDFMNLNQTAHGGREFGFIGARMRQQHAVVTGHWQDKQAHERIGSWMRQAVSKQDTRHLKVCRFGDNMREVAVTDGDKVAAQIKFGFSVNTWAVGDLVQVVNSISDGDVNALVDEYESCYTMTPATQIHGEKRQNVLEAARIELGMKRFLEQGGFHAFTTTFEDLHGLKQLPGLAVQRLMQQGYGFAGEGDWKTAALLRIMKVMSTGLQGGTSFMEDYTYHFEKGNDLVLGSHMLEVCPSIAVEEKPILDVQHLGIGGKDDPARLIFNTQTGPAIVASLIDLGDRYRLLVNCIDTVKTPHSLPKLPVANALWKAQPDLPTASEAWILAGGAHHTVFSHALNLNDMRQFAEMHDIEITVIDNDTRLPAFKDALRWNEVYYGFRR</sequence>
<proteinExistence type="inferred from homology"/>